<proteinExistence type="evidence at protein level"/>
<sequence length="122" mass="13741">MISGIRVNDNCVTEFNNMKIRKTCGWIIFVIQNCEIIIHSKGASTTLTELVQSIDKNNEIQCAYVVFDAVSKIHFFMYARESSNSRDRMTYASSKQAILKKIEGVNVLTSVIESAQDVADLK</sequence>
<gene>
    <name type="ORF">PFE0165w</name>
</gene>
<dbReference type="EMBL" id="AL844504">
    <property type="protein sequence ID" value="CAD51399.1"/>
    <property type="molecule type" value="Genomic_DNA"/>
</dbReference>
<dbReference type="RefSeq" id="XP_001351592.1">
    <property type="nucleotide sequence ID" value="XM_001351556.1"/>
</dbReference>
<dbReference type="PDB" id="2XF1">
    <property type="method" value="X-ray"/>
    <property type="resolution" value="1.96 A"/>
    <property type="chains" value="A=1-122"/>
</dbReference>
<dbReference type="PDBsum" id="2XF1"/>
<dbReference type="SMR" id="Q8I467"/>
<dbReference type="STRING" id="36329.Q8I467"/>
<dbReference type="PaxDb" id="5833-PFE0165w"/>
<dbReference type="EnsemblProtists" id="CAD51399">
    <property type="protein sequence ID" value="CAD51399"/>
    <property type="gene ID" value="PF3D7_0503400"/>
</dbReference>
<dbReference type="KEGG" id="pfa:PF3D7_0503400"/>
<dbReference type="VEuPathDB" id="PlasmoDB:PF3D7_0503400"/>
<dbReference type="HOGENOM" id="CLU_094004_3_2_1"/>
<dbReference type="InParanoid" id="Q8I467"/>
<dbReference type="OMA" id="WIIFVIE"/>
<dbReference type="OrthoDB" id="10249245at2759"/>
<dbReference type="PhylomeDB" id="Q8I467"/>
<dbReference type="EvolutionaryTrace" id="Q8I467"/>
<dbReference type="Proteomes" id="UP000001450">
    <property type="component" value="Chromosome 5"/>
</dbReference>
<dbReference type="GO" id="GO:0015629">
    <property type="term" value="C:actin cytoskeleton"/>
    <property type="evidence" value="ECO:0000314"/>
    <property type="project" value="GeneDB"/>
</dbReference>
<dbReference type="GO" id="GO:0005737">
    <property type="term" value="C:cytoplasm"/>
    <property type="evidence" value="ECO:0000318"/>
    <property type="project" value="GO_Central"/>
</dbReference>
<dbReference type="GO" id="GO:0005829">
    <property type="term" value="C:cytosol"/>
    <property type="evidence" value="ECO:0000314"/>
    <property type="project" value="GeneDB"/>
</dbReference>
<dbReference type="GO" id="GO:0051015">
    <property type="term" value="F:actin filament binding"/>
    <property type="evidence" value="ECO:0000318"/>
    <property type="project" value="GO_Central"/>
</dbReference>
<dbReference type="GO" id="GO:0003785">
    <property type="term" value="F:actin monomer binding"/>
    <property type="evidence" value="ECO:0000314"/>
    <property type="project" value="GeneDB"/>
</dbReference>
<dbReference type="GO" id="GO:0030036">
    <property type="term" value="P:actin cytoskeleton organization"/>
    <property type="evidence" value="ECO:0000314"/>
    <property type="project" value="GeneDB"/>
</dbReference>
<dbReference type="GO" id="GO:0030042">
    <property type="term" value="P:actin filament depolymerization"/>
    <property type="evidence" value="ECO:0000318"/>
    <property type="project" value="GO_Central"/>
</dbReference>
<dbReference type="GO" id="GO:0051014">
    <property type="term" value="P:actin filament severing"/>
    <property type="evidence" value="ECO:0000314"/>
    <property type="project" value="GeneDB"/>
</dbReference>
<dbReference type="GO" id="GO:0060327">
    <property type="term" value="P:cytoplasmic actin-based contraction involved in cell motility"/>
    <property type="evidence" value="ECO:0000314"/>
    <property type="project" value="GeneDB"/>
</dbReference>
<dbReference type="FunFam" id="3.40.20.10:FF:000046">
    <property type="entry name" value="Cofilin/actin-depolymerizing factor like 1"/>
    <property type="match status" value="1"/>
</dbReference>
<dbReference type="Gene3D" id="3.40.20.10">
    <property type="entry name" value="Severin"/>
    <property type="match status" value="1"/>
</dbReference>
<dbReference type="InterPro" id="IPR002108">
    <property type="entry name" value="ADF-H"/>
</dbReference>
<dbReference type="InterPro" id="IPR029006">
    <property type="entry name" value="ADF-H/Gelsolin-like_dom_sf"/>
</dbReference>
<dbReference type="InterPro" id="IPR017904">
    <property type="entry name" value="ADF/Cofilin"/>
</dbReference>
<dbReference type="PANTHER" id="PTHR11913">
    <property type="entry name" value="COFILIN-RELATED"/>
    <property type="match status" value="1"/>
</dbReference>
<dbReference type="Pfam" id="PF00241">
    <property type="entry name" value="Cofilin_ADF"/>
    <property type="match status" value="1"/>
</dbReference>
<dbReference type="SMART" id="SM00102">
    <property type="entry name" value="ADF"/>
    <property type="match status" value="1"/>
</dbReference>
<dbReference type="SUPFAM" id="SSF55753">
    <property type="entry name" value="Actin depolymerizing proteins"/>
    <property type="match status" value="1"/>
</dbReference>
<dbReference type="PROSITE" id="PS51263">
    <property type="entry name" value="ADF_H"/>
    <property type="match status" value="1"/>
</dbReference>
<comment type="function">
    <text evidence="1">Not involved in actin polymerisation, instead functions to stimulate nucleotide exchange on monomeric actin and influence turnover of the small amount of cytosolic actin microfilaments. Essential for erythrocytic schizogony (By similarity).</text>
</comment>
<comment type="subunit">
    <text evidence="1">Interacts with monomeric actin, does not bind to actin polymers.</text>
</comment>
<comment type="subcellular location">
    <subcellularLocation>
        <location evidence="2">Cytoplasm</location>
    </subcellularLocation>
    <subcellularLocation>
        <location evidence="2">Cytoplasm</location>
        <location evidence="2">Cytoskeleton</location>
    </subcellularLocation>
</comment>
<comment type="similarity">
    <text evidence="3">Belongs to the actin-binding proteins ADF family.</text>
</comment>
<accession>Q8I467</accession>
<feature type="chain" id="PRO_0000377706" description="Cofilin/actin-depolymerizing factor homolog 1">
    <location>
        <begin position="1"/>
        <end position="122"/>
    </location>
</feature>
<feature type="domain" description="ADF-H" evidence="4">
    <location>
        <begin position="4"/>
        <end position="122"/>
    </location>
</feature>
<reference key="1">
    <citation type="journal article" date="2002" name="Nature">
        <title>Genome sequence of the human malaria parasite Plasmodium falciparum.</title>
        <authorList>
            <person name="Gardner M.J."/>
            <person name="Hall N."/>
            <person name="Fung E."/>
            <person name="White O."/>
            <person name="Berriman M."/>
            <person name="Hyman R.W."/>
            <person name="Carlton J.M."/>
            <person name="Pain A."/>
            <person name="Nelson K.E."/>
            <person name="Bowman S."/>
            <person name="Paulsen I.T."/>
            <person name="James K.D."/>
            <person name="Eisen J.A."/>
            <person name="Rutherford K.M."/>
            <person name="Salzberg S.L."/>
            <person name="Craig A."/>
            <person name="Kyes S."/>
            <person name="Chan M.-S."/>
            <person name="Nene V."/>
            <person name="Shallom S.J."/>
            <person name="Suh B."/>
            <person name="Peterson J."/>
            <person name="Angiuoli S."/>
            <person name="Pertea M."/>
            <person name="Allen J."/>
            <person name="Selengut J."/>
            <person name="Haft D."/>
            <person name="Mather M.W."/>
            <person name="Vaidya A.B."/>
            <person name="Martin D.M.A."/>
            <person name="Fairlamb A.H."/>
            <person name="Fraunholz M.J."/>
            <person name="Roos D.S."/>
            <person name="Ralph S.A."/>
            <person name="McFadden G.I."/>
            <person name="Cummings L.M."/>
            <person name="Subramanian G.M."/>
            <person name="Mungall C."/>
            <person name="Venter J.C."/>
            <person name="Carucci D.J."/>
            <person name="Hoffman S.L."/>
            <person name="Newbold C."/>
            <person name="Davis R.W."/>
            <person name="Fraser C.M."/>
            <person name="Barrell B.G."/>
        </authorList>
    </citation>
    <scope>NUCLEOTIDE SEQUENCE [LARGE SCALE GENOMIC DNA]</scope>
    <source>
        <strain>3D7</strain>
    </source>
</reference>
<reference evidence="5" key="2">
    <citation type="journal article" date="2002" name="Nature">
        <title>Sequence of Plasmodium falciparum chromosomes 1, 3-9 and 13.</title>
        <authorList>
            <person name="Hall N."/>
            <person name="Pain A."/>
            <person name="Berriman M."/>
            <person name="Churcher C.M."/>
            <person name="Harris B."/>
            <person name="Harris D."/>
            <person name="Mungall K.L."/>
            <person name="Bowman S."/>
            <person name="Atkin R."/>
            <person name="Baker S."/>
            <person name="Barron A."/>
            <person name="Brooks K."/>
            <person name="Buckee C.O."/>
            <person name="Burrows C."/>
            <person name="Cherevach I."/>
            <person name="Chillingworth C."/>
            <person name="Chillingworth T."/>
            <person name="Christodoulou Z."/>
            <person name="Clark L."/>
            <person name="Clark R."/>
            <person name="Corton C."/>
            <person name="Cronin A."/>
            <person name="Davies R.M."/>
            <person name="Davis P."/>
            <person name="Dear P."/>
            <person name="Dearden F."/>
            <person name="Doggett J."/>
            <person name="Feltwell T."/>
            <person name="Goble A."/>
            <person name="Goodhead I."/>
            <person name="Gwilliam R."/>
            <person name="Hamlin N."/>
            <person name="Hance Z."/>
            <person name="Harper D."/>
            <person name="Hauser H."/>
            <person name="Hornsby T."/>
            <person name="Holroyd S."/>
            <person name="Horrocks P."/>
            <person name="Humphray S."/>
            <person name="Jagels K."/>
            <person name="James K.D."/>
            <person name="Johnson D."/>
            <person name="Kerhornou A."/>
            <person name="Knights A."/>
            <person name="Konfortov B."/>
            <person name="Kyes S."/>
            <person name="Larke N."/>
            <person name="Lawson D."/>
            <person name="Lennard N."/>
            <person name="Line A."/>
            <person name="Maddison M."/>
            <person name="Mclean J."/>
            <person name="Mooney P."/>
            <person name="Moule S."/>
            <person name="Murphy L."/>
            <person name="Oliver K."/>
            <person name="Ormond D."/>
            <person name="Price C."/>
            <person name="Quail M.A."/>
            <person name="Rabbinowitsch E."/>
            <person name="Rajandream M.A."/>
            <person name="Rutter S."/>
            <person name="Rutherford K.M."/>
            <person name="Sanders M."/>
            <person name="Simmonds M."/>
            <person name="Seeger K."/>
            <person name="Sharp S."/>
            <person name="Smith R."/>
            <person name="Squares R."/>
            <person name="Squares S."/>
            <person name="Stevens K."/>
            <person name="Taylor K."/>
            <person name="Tivey A."/>
            <person name="Unwin L."/>
            <person name="Whitehead S."/>
            <person name="Woodward J.R."/>
            <person name="Sulston J.E."/>
            <person name="Craig A."/>
            <person name="Newbold C."/>
            <person name="Barrell B.G."/>
        </authorList>
    </citation>
    <scope>NUCLEOTIDE SEQUENCE [LARGE SCALE GENOMIC DNA]</scope>
    <source>
        <strain>3D7</strain>
    </source>
</reference>
<protein>
    <recommendedName>
        <fullName evidence="1">Cofilin/actin-depolymerizing factor homolog 1</fullName>
    </recommendedName>
</protein>
<keyword id="KW-0002">3D-structure</keyword>
<keyword id="KW-0009">Actin-binding</keyword>
<keyword id="KW-0963">Cytoplasm</keyword>
<keyword id="KW-0206">Cytoskeleton</keyword>
<keyword id="KW-1185">Reference proteome</keyword>
<organism>
    <name type="scientific">Plasmodium falciparum (isolate 3D7)</name>
    <dbReference type="NCBI Taxonomy" id="36329"/>
    <lineage>
        <taxon>Eukaryota</taxon>
        <taxon>Sar</taxon>
        <taxon>Alveolata</taxon>
        <taxon>Apicomplexa</taxon>
        <taxon>Aconoidasida</taxon>
        <taxon>Haemosporida</taxon>
        <taxon>Plasmodiidae</taxon>
        <taxon>Plasmodium</taxon>
        <taxon>Plasmodium (Laverania)</taxon>
    </lineage>
</organism>
<evidence type="ECO:0000250" key="1">
    <source>
        <dbReference type="UniProtKB" id="P86292"/>
    </source>
</evidence>
<evidence type="ECO:0000250" key="2">
    <source>
        <dbReference type="UniProtKB" id="Q03048"/>
    </source>
</evidence>
<evidence type="ECO:0000255" key="3"/>
<evidence type="ECO:0000255" key="4">
    <source>
        <dbReference type="PROSITE-ProRule" id="PRU00599"/>
    </source>
</evidence>
<evidence type="ECO:0000312" key="5">
    <source>
        <dbReference type="EMBL" id="CAD51399.1"/>
    </source>
</evidence>
<name>CADF1_PLAF7</name>